<evidence type="ECO:0000255" key="1"/>
<evidence type="ECO:0000255" key="2">
    <source>
        <dbReference type="PROSITE-ProRule" id="PRU00114"/>
    </source>
</evidence>
<evidence type="ECO:0000269" key="3">
    <source>
    </source>
</evidence>
<evidence type="ECO:0000269" key="4">
    <source>
    </source>
</evidence>
<evidence type="ECO:0000269" key="5">
    <source>
    </source>
</evidence>
<evidence type="ECO:0000269" key="6">
    <source>
    </source>
</evidence>
<evidence type="ECO:0000303" key="7">
    <source>
    </source>
</evidence>
<evidence type="ECO:0000303" key="8">
    <source>
    </source>
</evidence>
<evidence type="ECO:0000303" key="9">
    <source>
    </source>
</evidence>
<evidence type="ECO:0000305" key="10"/>
<organism>
    <name type="scientific">Homo sapiens</name>
    <name type="common">Human</name>
    <dbReference type="NCBI Taxonomy" id="9606"/>
    <lineage>
        <taxon>Eukaryota</taxon>
        <taxon>Metazoa</taxon>
        <taxon>Chordata</taxon>
        <taxon>Craniata</taxon>
        <taxon>Vertebrata</taxon>
        <taxon>Euteleostomi</taxon>
        <taxon>Mammalia</taxon>
        <taxon>Eutheria</taxon>
        <taxon>Euarchontoglires</taxon>
        <taxon>Primates</taxon>
        <taxon>Haplorrhini</taxon>
        <taxon>Catarrhini</taxon>
        <taxon>Hominidae</taxon>
        <taxon>Homo</taxon>
    </lineage>
</organism>
<name>HECA2_HUMAN</name>
<proteinExistence type="evidence at protein level"/>
<gene>
    <name type="primary">HEPACAM2</name>
    <name type="synonym">MIKI</name>
    <name type="ORF">UNQ305/PRO346</name>
</gene>
<protein>
    <recommendedName>
        <fullName>HEPACAM family member 2</fullName>
    </recommendedName>
    <alternativeName>
        <fullName>Mitotic kinetics regulator</fullName>
    </alternativeName>
</protein>
<sequence>MGQDAFMEPFGDTLGVFQCKIYLLLFGACSGLKVTVPSHTVHGVRGQALYLPVHYGFHTPASDIQIIWLFERPHTMPKYLLGSVNKSVVPDLEYQHKFTMMPPNASLLINPLQFPDEGNYIVKVNIQGNGTLSASQKIQVTVDDPVTKPVVQIHPPSGAVEYVGNMTLTCHVEGGTRLAYQWLKNGRPVHTSSTYSFSPQNNTLHIAPVTKEDIGNYSCLVRNPVSEMESDIIMPIIYYGPYGLQVNSDKGLKVGEVFTVDLGEAILFDCSADSHPPNTYSWIRRTDNTTYIIKHGPRLEVASEKVAQKTMDYVCCAYNNITGRQDETHFTVIITSVGLEKLAQKGKSLSPLASITGISLFLIISMCLLFLWKKYQPYKVIKQKLEGRPETEYRKAQTFSGHEDALDDFGIYEFVAFPDVSGVSRIPSRSVPASDCVSGQDLHSTVYEVIQHIPAQQQDHPE</sequence>
<dbReference type="EMBL" id="AY358345">
    <property type="protein sequence ID" value="AAQ88711.1"/>
    <property type="molecule type" value="mRNA"/>
</dbReference>
<dbReference type="EMBL" id="AK096002">
    <property type="protein sequence ID" value="BAG53196.1"/>
    <property type="molecule type" value="mRNA"/>
</dbReference>
<dbReference type="EMBL" id="AK298361">
    <property type="protein sequence ID" value="BAG60603.1"/>
    <property type="molecule type" value="mRNA"/>
</dbReference>
<dbReference type="EMBL" id="AC000119">
    <property type="status" value="NOT_ANNOTATED_CDS"/>
    <property type="molecule type" value="Genomic_DNA"/>
</dbReference>
<dbReference type="EMBL" id="AC002453">
    <property type="status" value="NOT_ANNOTATED_CDS"/>
    <property type="molecule type" value="Genomic_DNA"/>
</dbReference>
<dbReference type="EMBL" id="BC136300">
    <property type="protein sequence ID" value="AAI36301.1"/>
    <property type="molecule type" value="mRNA"/>
</dbReference>
<dbReference type="EMBL" id="BC136301">
    <property type="protein sequence ID" value="AAI36302.1"/>
    <property type="molecule type" value="mRNA"/>
</dbReference>
<dbReference type="EMBL" id="BC139906">
    <property type="protein sequence ID" value="AAI39907.1"/>
    <property type="molecule type" value="mRNA"/>
</dbReference>
<dbReference type="CCDS" id="CCDS43616.1">
    <molecule id="A8MVW5-1"/>
</dbReference>
<dbReference type="CCDS" id="CCDS5629.1">
    <molecule id="A8MVW5-2"/>
</dbReference>
<dbReference type="CCDS" id="CCDS75632.1">
    <molecule id="A8MVW5-3"/>
</dbReference>
<dbReference type="RefSeq" id="NP_001034461.1">
    <molecule id="A8MVW5-1"/>
    <property type="nucleotide sequence ID" value="NM_001039372.4"/>
</dbReference>
<dbReference type="RefSeq" id="NP_001275733.1">
    <molecule id="A8MVW5-3"/>
    <property type="nucleotide sequence ID" value="NM_001288804.3"/>
</dbReference>
<dbReference type="RefSeq" id="NP_001275739.1">
    <property type="nucleotide sequence ID" value="NM_001288810.2"/>
</dbReference>
<dbReference type="RefSeq" id="NP_937794.1">
    <molecule id="A8MVW5-2"/>
    <property type="nucleotide sequence ID" value="NM_198151.4"/>
</dbReference>
<dbReference type="SMR" id="A8MVW5"/>
<dbReference type="BioGRID" id="128949">
    <property type="interactions" value="52"/>
</dbReference>
<dbReference type="FunCoup" id="A8MVW5">
    <property type="interactions" value="64"/>
</dbReference>
<dbReference type="IntAct" id="A8MVW5">
    <property type="interactions" value="28"/>
</dbReference>
<dbReference type="STRING" id="9606.ENSP00000390204"/>
<dbReference type="GlyCosmos" id="A8MVW5">
    <property type="glycosylation" value="4 sites, No reported glycans"/>
</dbReference>
<dbReference type="GlyGen" id="A8MVW5">
    <property type="glycosylation" value="7 sites, 11 N-linked glycans (5 sites)"/>
</dbReference>
<dbReference type="iPTMnet" id="A8MVW5"/>
<dbReference type="PhosphoSitePlus" id="A8MVW5"/>
<dbReference type="BioMuta" id="HEPACAM2"/>
<dbReference type="MassIVE" id="A8MVW5"/>
<dbReference type="PaxDb" id="9606-ENSP00000390204"/>
<dbReference type="PeptideAtlas" id="A8MVW5"/>
<dbReference type="ProteomicsDB" id="19755"/>
<dbReference type="ProteomicsDB" id="2210">
    <molecule id="A8MVW5-1"/>
</dbReference>
<dbReference type="ProteomicsDB" id="2211">
    <molecule id="A8MVW5-2"/>
</dbReference>
<dbReference type="Antibodypedia" id="2717">
    <property type="antibodies" value="136 antibodies from 21 providers"/>
</dbReference>
<dbReference type="DNASU" id="253012"/>
<dbReference type="Ensembl" id="ENST00000341723.8">
    <molecule id="A8MVW5-2"/>
    <property type="protein sequence ID" value="ENSP00000340532.4"/>
    <property type="gene ID" value="ENSG00000188175.10"/>
</dbReference>
<dbReference type="Ensembl" id="ENST00000394468.7">
    <molecule id="A8MVW5-1"/>
    <property type="protein sequence ID" value="ENSP00000377980.2"/>
    <property type="gene ID" value="ENSG00000188175.10"/>
</dbReference>
<dbReference type="Ensembl" id="ENST00000453812.2">
    <molecule id="A8MVW5-3"/>
    <property type="protein sequence ID" value="ENSP00000390204.2"/>
    <property type="gene ID" value="ENSG00000188175.10"/>
</dbReference>
<dbReference type="GeneID" id="253012"/>
<dbReference type="KEGG" id="hsa:253012"/>
<dbReference type="MANE-Select" id="ENST00000394468.7">
    <property type="protein sequence ID" value="ENSP00000377980.2"/>
    <property type="RefSeq nucleotide sequence ID" value="NM_001039372.4"/>
    <property type="RefSeq protein sequence ID" value="NP_001034461.1"/>
</dbReference>
<dbReference type="UCSC" id="uc003uml.5">
    <molecule id="A8MVW5-1"/>
    <property type="organism name" value="human"/>
</dbReference>
<dbReference type="AGR" id="HGNC:27364"/>
<dbReference type="CTD" id="253012"/>
<dbReference type="DisGeNET" id="253012"/>
<dbReference type="GeneCards" id="HEPACAM2"/>
<dbReference type="HGNC" id="HGNC:27364">
    <property type="gene designation" value="HEPACAM2"/>
</dbReference>
<dbReference type="HPA" id="ENSG00000188175">
    <property type="expression patterns" value="Tissue enriched (intestine)"/>
</dbReference>
<dbReference type="MalaCards" id="HEPACAM2"/>
<dbReference type="MIM" id="614133">
    <property type="type" value="gene"/>
</dbReference>
<dbReference type="neXtProt" id="NX_A8MVW5"/>
<dbReference type="OpenTargets" id="ENSG00000188175"/>
<dbReference type="PharmGKB" id="PA162390849"/>
<dbReference type="VEuPathDB" id="HostDB:ENSG00000188175"/>
<dbReference type="eggNOG" id="ENOG502QRJQ">
    <property type="taxonomic scope" value="Eukaryota"/>
</dbReference>
<dbReference type="GeneTree" id="ENSGT01130000278319"/>
<dbReference type="HOGENOM" id="CLU_049122_0_0_1"/>
<dbReference type="InParanoid" id="A8MVW5"/>
<dbReference type="OMA" id="TIDYMCC"/>
<dbReference type="OrthoDB" id="9872799at2759"/>
<dbReference type="PAN-GO" id="A8MVW5">
    <property type="GO annotations" value="5 GO annotations based on evolutionary models"/>
</dbReference>
<dbReference type="PhylomeDB" id="A8MVW5"/>
<dbReference type="TreeFam" id="TF331199"/>
<dbReference type="PathwayCommons" id="A8MVW5"/>
<dbReference type="SignaLink" id="A8MVW5"/>
<dbReference type="BioGRID-ORCS" id="253012">
    <property type="hits" value="10 hits in 1161 CRISPR screens"/>
</dbReference>
<dbReference type="ChiTaRS" id="HEPACAM2">
    <property type="organism name" value="human"/>
</dbReference>
<dbReference type="GenomeRNAi" id="253012"/>
<dbReference type="Pharos" id="A8MVW5">
    <property type="development level" value="Tbio"/>
</dbReference>
<dbReference type="PRO" id="PR:A8MVW5"/>
<dbReference type="Proteomes" id="UP000005640">
    <property type="component" value="Chromosome 7"/>
</dbReference>
<dbReference type="RNAct" id="A8MVW5">
    <property type="molecule type" value="protein"/>
</dbReference>
<dbReference type="Bgee" id="ENSG00000188175">
    <property type="expression patterns" value="Expressed in ileal mucosa and 91 other cell types or tissues"/>
</dbReference>
<dbReference type="ExpressionAtlas" id="A8MVW5">
    <property type="expression patterns" value="baseline and differential"/>
</dbReference>
<dbReference type="GO" id="GO:0005813">
    <property type="term" value="C:centrosome"/>
    <property type="evidence" value="ECO:0000314"/>
    <property type="project" value="UniProtKB"/>
</dbReference>
<dbReference type="GO" id="GO:0005794">
    <property type="term" value="C:Golgi apparatus"/>
    <property type="evidence" value="ECO:0000314"/>
    <property type="project" value="UniProtKB"/>
</dbReference>
<dbReference type="GO" id="GO:0000139">
    <property type="term" value="C:Golgi membrane"/>
    <property type="evidence" value="ECO:0007669"/>
    <property type="project" value="UniProtKB-SubCell"/>
</dbReference>
<dbReference type="GO" id="GO:0043231">
    <property type="term" value="C:intracellular membrane-bounded organelle"/>
    <property type="evidence" value="ECO:0000314"/>
    <property type="project" value="HPA"/>
</dbReference>
<dbReference type="GO" id="GO:0030496">
    <property type="term" value="C:midbody"/>
    <property type="evidence" value="ECO:0000314"/>
    <property type="project" value="UniProtKB"/>
</dbReference>
<dbReference type="GO" id="GO:0072686">
    <property type="term" value="C:mitotic spindle"/>
    <property type="evidence" value="ECO:0000314"/>
    <property type="project" value="HPA"/>
</dbReference>
<dbReference type="GO" id="GO:0005654">
    <property type="term" value="C:nucleoplasm"/>
    <property type="evidence" value="ECO:0000314"/>
    <property type="project" value="HPA"/>
</dbReference>
<dbReference type="GO" id="GO:0005819">
    <property type="term" value="C:spindle"/>
    <property type="evidence" value="ECO:0000314"/>
    <property type="project" value="UniProtKB"/>
</dbReference>
<dbReference type="GO" id="GO:0051301">
    <property type="term" value="P:cell division"/>
    <property type="evidence" value="ECO:0007669"/>
    <property type="project" value="UniProtKB-KW"/>
</dbReference>
<dbReference type="GO" id="GO:0007098">
    <property type="term" value="P:centrosome cycle"/>
    <property type="evidence" value="ECO:0000315"/>
    <property type="project" value="UniProtKB"/>
</dbReference>
<dbReference type="FunFam" id="2.60.40.10:FF:000483">
    <property type="entry name" value="HEPACAM family member 2 isoform X1"/>
    <property type="match status" value="1"/>
</dbReference>
<dbReference type="FunFam" id="2.60.40.10:FF:000624">
    <property type="entry name" value="HEPACAM family member 2 isoform X1"/>
    <property type="match status" value="1"/>
</dbReference>
<dbReference type="FunFam" id="2.60.40.10:FF:000506">
    <property type="entry name" value="HEPACAM family member 2 isoform X2"/>
    <property type="match status" value="1"/>
</dbReference>
<dbReference type="Gene3D" id="2.60.40.10">
    <property type="entry name" value="Immunoglobulins"/>
    <property type="match status" value="3"/>
</dbReference>
<dbReference type="InterPro" id="IPR052280">
    <property type="entry name" value="HEPACAM_domain"/>
</dbReference>
<dbReference type="InterPro" id="IPR007110">
    <property type="entry name" value="Ig-like_dom"/>
</dbReference>
<dbReference type="InterPro" id="IPR036179">
    <property type="entry name" value="Ig-like_dom_sf"/>
</dbReference>
<dbReference type="InterPro" id="IPR013783">
    <property type="entry name" value="Ig-like_fold"/>
</dbReference>
<dbReference type="InterPro" id="IPR003599">
    <property type="entry name" value="Ig_sub"/>
</dbReference>
<dbReference type="InterPro" id="IPR003598">
    <property type="entry name" value="Ig_sub2"/>
</dbReference>
<dbReference type="PANTHER" id="PTHR44888:SF1">
    <property type="entry name" value="HEPACAM FAMILY MEMBER 2"/>
    <property type="match status" value="1"/>
</dbReference>
<dbReference type="PANTHER" id="PTHR44888">
    <property type="entry name" value="HEPACAM FAMILY MEMBER 2-RELATED"/>
    <property type="match status" value="1"/>
</dbReference>
<dbReference type="Pfam" id="PF13927">
    <property type="entry name" value="Ig_3"/>
    <property type="match status" value="1"/>
</dbReference>
<dbReference type="SMART" id="SM00409">
    <property type="entry name" value="IG"/>
    <property type="match status" value="3"/>
</dbReference>
<dbReference type="SMART" id="SM00408">
    <property type="entry name" value="IGc2"/>
    <property type="match status" value="1"/>
</dbReference>
<dbReference type="SUPFAM" id="SSF48726">
    <property type="entry name" value="Immunoglobulin"/>
    <property type="match status" value="3"/>
</dbReference>
<dbReference type="PROSITE" id="PS50835">
    <property type="entry name" value="IG_LIKE"/>
    <property type="match status" value="2"/>
</dbReference>
<feature type="signal peptide" evidence="1">
    <location>
        <begin position="1"/>
        <end position="31"/>
    </location>
</feature>
<feature type="chain" id="PRO_0000332220" description="HEPACAM family member 2">
    <location>
        <begin position="32"/>
        <end position="462"/>
    </location>
</feature>
<feature type="transmembrane region" description="Helical" evidence="1">
    <location>
        <begin position="352"/>
        <end position="372"/>
    </location>
</feature>
<feature type="topological domain" description="Cytoplasmic" evidence="1">
    <location>
        <begin position="373"/>
        <end position="462"/>
    </location>
</feature>
<feature type="domain" description="Ig-like C2-type 1">
    <location>
        <begin position="149"/>
        <end position="233"/>
    </location>
</feature>
<feature type="domain" description="Ig-like C2-type 2">
    <location>
        <begin position="235"/>
        <end position="331"/>
    </location>
</feature>
<feature type="glycosylation site" description="N-linked (GlcNAc...) asparagine" evidence="1">
    <location>
        <position position="85"/>
    </location>
</feature>
<feature type="glycosylation site" description="N-linked (GlcNAc...) asparagine" evidence="1">
    <location>
        <position position="129"/>
    </location>
</feature>
<feature type="glycosylation site" description="N-linked (GlcNAc...) asparagine" evidence="1">
    <location>
        <position position="165"/>
    </location>
</feature>
<feature type="glycosylation site" description="N-linked (GlcNAc...) asparagine" evidence="1">
    <location>
        <position position="320"/>
    </location>
</feature>
<feature type="disulfide bond" evidence="2">
    <location>
        <begin position="170"/>
        <end position="219"/>
    </location>
</feature>
<feature type="disulfide bond" evidence="2">
    <location>
        <begin position="270"/>
        <end position="315"/>
    </location>
</feature>
<feature type="splice variant" id="VSP_033355" description="In isoform 2." evidence="7 9">
    <original>MGQDAFMEPFGDTLGVFQCKIYLLLF</original>
    <variation>MWLKVFTTFLSFAT</variation>
    <location>
        <begin position="1"/>
        <end position="26"/>
    </location>
</feature>
<feature type="splice variant" id="VSP_044322" description="In isoform 3." evidence="8">
    <original>F</original>
    <variation>FDIVANCLLLRFKLSVSSYEIWKK</variation>
    <location>
        <position position="26"/>
    </location>
</feature>
<feature type="sequence variant" id="VAR_042976" description="In a breast cancer sample; somatic mutation." evidence="3">
    <original>G</original>
    <variation>R</variation>
    <location>
        <position position="31"/>
    </location>
</feature>
<feature type="sequence variant" id="VAR_042977" description="In dbSNP:rs10281525.">
    <original>K</original>
    <variation>T</variation>
    <location>
        <position position="86"/>
    </location>
</feature>
<feature type="sequence variant" id="VAR_064721" description="Found in a renal cell carcinoma sample; somatic mutation; dbSNP:rs555587403." evidence="5">
    <original>F</original>
    <variation>L</variation>
    <location>
        <position position="114"/>
    </location>
</feature>
<feature type="sequence conflict" description="In Ref. 2; BAG60603." evidence="10" ref="2">
    <original>P</original>
    <variation>S</variation>
    <location>
        <position position="277"/>
    </location>
</feature>
<comment type="function">
    <text evidence="6">Required during prometaphase for centrosome maturation. Following poly-ADP-ribosylation (PARsylation) by TNKS, translocates from the Golgi apparatus to mitotic centrosomes and plays a key role in the formation of robust microtubules for prompt movement of chromosomes: anchors AKAP9/CG-NAP, a scaffold protein of the gamma-tubulin ring complex and promotes centrosome maturation.</text>
</comment>
<comment type="subcellular location">
    <subcellularLocation>
        <location evidence="4 6">Golgi apparatus membrane</location>
        <topology evidence="1">Single-pass type I membrane protein</topology>
    </subcellularLocation>
    <subcellularLocation>
        <location evidence="4 6">Cytoplasm</location>
        <location evidence="4 6">Cytoskeleton</location>
        <location evidence="4 6">Spindle</location>
    </subcellularLocation>
    <subcellularLocation>
        <location evidence="4 6">Cytoplasm</location>
        <location evidence="4 6">Cytoskeleton</location>
        <location evidence="4 6">Microtubule organizing center</location>
        <location evidence="4 6">Centrosome</location>
    </subcellularLocation>
    <subcellularLocation>
        <location evidence="6">Midbody</location>
    </subcellularLocation>
    <text evidence="4 6">In interphase, localizes to the Golgi apparatus. Localizes to centrosomes and spindles during prophase, prometaphase, and metaphase of mitosis, and to midbodies at telophase. Translocation to mitotic centrosomes is the result of poly-ADP-ribosylation (PARsylation).</text>
</comment>
<comment type="alternative products">
    <event type="alternative splicing"/>
    <isoform>
        <id>A8MVW5-1</id>
        <name>1</name>
        <sequence type="displayed"/>
    </isoform>
    <isoform>
        <id>A8MVW5-2</id>
        <name>2</name>
        <sequence type="described" ref="VSP_033355"/>
    </isoform>
    <isoform>
        <id>A8MVW5-3</id>
        <name>3</name>
        <sequence type="described" ref="VSP_044322"/>
    </isoform>
</comment>
<comment type="tissue specificity">
    <text evidence="4">Widely expressed.</text>
</comment>
<comment type="PTM">
    <text>Poly-ADP-ribosylated (PARsylated) by tankyrase TNKS during late G2 and prophase, leading to translocation to mitotic centrosomes.</text>
</comment>
<comment type="PTM">
    <text evidence="4 6">N-glycosylated.</text>
</comment>
<accession>A8MVW5</accession>
<accession>B3KTT4</accession>
<accession>B4DPJ1</accession>
<accession>B9EG93</accession>
<accession>E9PDV5</accession>
<accession>Q6UXI0</accession>
<reference key="1">
    <citation type="journal article" date="2003" name="Genome Res.">
        <title>The secreted protein discovery initiative (SPDI), a large-scale effort to identify novel human secreted and transmembrane proteins: a bioinformatics assessment.</title>
        <authorList>
            <person name="Clark H.F."/>
            <person name="Gurney A.L."/>
            <person name="Abaya E."/>
            <person name="Baker K."/>
            <person name="Baldwin D.T."/>
            <person name="Brush J."/>
            <person name="Chen J."/>
            <person name="Chow B."/>
            <person name="Chui C."/>
            <person name="Crowley C."/>
            <person name="Currell B."/>
            <person name="Deuel B."/>
            <person name="Dowd P."/>
            <person name="Eaton D."/>
            <person name="Foster J.S."/>
            <person name="Grimaldi C."/>
            <person name="Gu Q."/>
            <person name="Hass P.E."/>
            <person name="Heldens S."/>
            <person name="Huang A."/>
            <person name="Kim H.S."/>
            <person name="Klimowski L."/>
            <person name="Jin Y."/>
            <person name="Johnson S."/>
            <person name="Lee J."/>
            <person name="Lewis L."/>
            <person name="Liao D."/>
            <person name="Mark M.R."/>
            <person name="Robbie E."/>
            <person name="Sanchez C."/>
            <person name="Schoenfeld J."/>
            <person name="Seshagiri S."/>
            <person name="Simmons L."/>
            <person name="Singh J."/>
            <person name="Smith V."/>
            <person name="Stinson J."/>
            <person name="Vagts A."/>
            <person name="Vandlen R.L."/>
            <person name="Watanabe C."/>
            <person name="Wieand D."/>
            <person name="Woods K."/>
            <person name="Xie M.-H."/>
            <person name="Yansura D.G."/>
            <person name="Yi S."/>
            <person name="Yu G."/>
            <person name="Yuan J."/>
            <person name="Zhang M."/>
            <person name="Zhang Z."/>
            <person name="Goddard A.D."/>
            <person name="Wood W.I."/>
            <person name="Godowski P.J."/>
            <person name="Gray A.M."/>
        </authorList>
    </citation>
    <scope>NUCLEOTIDE SEQUENCE [LARGE SCALE MRNA] (ISOFORM 2)</scope>
</reference>
<reference key="2">
    <citation type="journal article" date="2004" name="Nat. Genet.">
        <title>Complete sequencing and characterization of 21,243 full-length human cDNAs.</title>
        <authorList>
            <person name="Ota T."/>
            <person name="Suzuki Y."/>
            <person name="Nishikawa T."/>
            <person name="Otsuki T."/>
            <person name="Sugiyama T."/>
            <person name="Irie R."/>
            <person name="Wakamatsu A."/>
            <person name="Hayashi K."/>
            <person name="Sato H."/>
            <person name="Nagai K."/>
            <person name="Kimura K."/>
            <person name="Makita H."/>
            <person name="Sekine M."/>
            <person name="Obayashi M."/>
            <person name="Nishi T."/>
            <person name="Shibahara T."/>
            <person name="Tanaka T."/>
            <person name="Ishii S."/>
            <person name="Yamamoto J."/>
            <person name="Saito K."/>
            <person name="Kawai Y."/>
            <person name="Isono Y."/>
            <person name="Nakamura Y."/>
            <person name="Nagahari K."/>
            <person name="Murakami K."/>
            <person name="Yasuda T."/>
            <person name="Iwayanagi T."/>
            <person name="Wagatsuma M."/>
            <person name="Shiratori A."/>
            <person name="Sudo H."/>
            <person name="Hosoiri T."/>
            <person name="Kaku Y."/>
            <person name="Kodaira H."/>
            <person name="Kondo H."/>
            <person name="Sugawara M."/>
            <person name="Takahashi M."/>
            <person name="Kanda K."/>
            <person name="Yokoi T."/>
            <person name="Furuya T."/>
            <person name="Kikkawa E."/>
            <person name="Omura Y."/>
            <person name="Abe K."/>
            <person name="Kamihara K."/>
            <person name="Katsuta N."/>
            <person name="Sato K."/>
            <person name="Tanikawa M."/>
            <person name="Yamazaki M."/>
            <person name="Ninomiya K."/>
            <person name="Ishibashi T."/>
            <person name="Yamashita H."/>
            <person name="Murakawa K."/>
            <person name="Fujimori K."/>
            <person name="Tanai H."/>
            <person name="Kimata M."/>
            <person name="Watanabe M."/>
            <person name="Hiraoka S."/>
            <person name="Chiba Y."/>
            <person name="Ishida S."/>
            <person name="Ono Y."/>
            <person name="Takiguchi S."/>
            <person name="Watanabe S."/>
            <person name="Yosida M."/>
            <person name="Hotuta T."/>
            <person name="Kusano J."/>
            <person name="Kanehori K."/>
            <person name="Takahashi-Fujii A."/>
            <person name="Hara H."/>
            <person name="Tanase T.-O."/>
            <person name="Nomura Y."/>
            <person name="Togiya S."/>
            <person name="Komai F."/>
            <person name="Hara R."/>
            <person name="Takeuchi K."/>
            <person name="Arita M."/>
            <person name="Imose N."/>
            <person name="Musashino K."/>
            <person name="Yuuki H."/>
            <person name="Oshima A."/>
            <person name="Sasaki N."/>
            <person name="Aotsuka S."/>
            <person name="Yoshikawa Y."/>
            <person name="Matsunawa H."/>
            <person name="Ichihara T."/>
            <person name="Shiohata N."/>
            <person name="Sano S."/>
            <person name="Moriya S."/>
            <person name="Momiyama H."/>
            <person name="Satoh N."/>
            <person name="Takami S."/>
            <person name="Terashima Y."/>
            <person name="Suzuki O."/>
            <person name="Nakagawa S."/>
            <person name="Senoh A."/>
            <person name="Mizoguchi H."/>
            <person name="Goto Y."/>
            <person name="Shimizu F."/>
            <person name="Wakebe H."/>
            <person name="Hishigaki H."/>
            <person name="Watanabe T."/>
            <person name="Sugiyama A."/>
            <person name="Takemoto M."/>
            <person name="Kawakami B."/>
            <person name="Yamazaki M."/>
            <person name="Watanabe K."/>
            <person name="Kumagai A."/>
            <person name="Itakura S."/>
            <person name="Fukuzumi Y."/>
            <person name="Fujimori Y."/>
            <person name="Komiyama M."/>
            <person name="Tashiro H."/>
            <person name="Tanigami A."/>
            <person name="Fujiwara T."/>
            <person name="Ono T."/>
            <person name="Yamada K."/>
            <person name="Fujii Y."/>
            <person name="Ozaki K."/>
            <person name="Hirao M."/>
            <person name="Ohmori Y."/>
            <person name="Kawabata A."/>
            <person name="Hikiji T."/>
            <person name="Kobatake N."/>
            <person name="Inagaki H."/>
            <person name="Ikema Y."/>
            <person name="Okamoto S."/>
            <person name="Okitani R."/>
            <person name="Kawakami T."/>
            <person name="Noguchi S."/>
            <person name="Itoh T."/>
            <person name="Shigeta K."/>
            <person name="Senba T."/>
            <person name="Matsumura K."/>
            <person name="Nakajima Y."/>
            <person name="Mizuno T."/>
            <person name="Morinaga M."/>
            <person name="Sasaki M."/>
            <person name="Togashi T."/>
            <person name="Oyama M."/>
            <person name="Hata H."/>
            <person name="Watanabe M."/>
            <person name="Komatsu T."/>
            <person name="Mizushima-Sugano J."/>
            <person name="Satoh T."/>
            <person name="Shirai Y."/>
            <person name="Takahashi Y."/>
            <person name="Nakagawa K."/>
            <person name="Okumura K."/>
            <person name="Nagase T."/>
            <person name="Nomura N."/>
            <person name="Kikuchi H."/>
            <person name="Masuho Y."/>
            <person name="Yamashita R."/>
            <person name="Nakai K."/>
            <person name="Yada T."/>
            <person name="Nakamura Y."/>
            <person name="Ohara O."/>
            <person name="Isogai T."/>
            <person name="Sugano S."/>
        </authorList>
    </citation>
    <scope>NUCLEOTIDE SEQUENCE [LARGE SCALE MRNA] (ISOFORMS 1 AND 3)</scope>
    <source>
        <tissue>Kidney</tissue>
    </source>
</reference>
<reference key="3">
    <citation type="journal article" date="2003" name="Nature">
        <title>The DNA sequence of human chromosome 7.</title>
        <authorList>
            <person name="Hillier L.W."/>
            <person name="Fulton R.S."/>
            <person name="Fulton L.A."/>
            <person name="Graves T.A."/>
            <person name="Pepin K.H."/>
            <person name="Wagner-McPherson C."/>
            <person name="Layman D."/>
            <person name="Maas J."/>
            <person name="Jaeger S."/>
            <person name="Walker R."/>
            <person name="Wylie K."/>
            <person name="Sekhon M."/>
            <person name="Becker M.C."/>
            <person name="O'Laughlin M.D."/>
            <person name="Schaller M.E."/>
            <person name="Fewell G.A."/>
            <person name="Delehaunty K.D."/>
            <person name="Miner T.L."/>
            <person name="Nash W.E."/>
            <person name="Cordes M."/>
            <person name="Du H."/>
            <person name="Sun H."/>
            <person name="Edwards J."/>
            <person name="Bradshaw-Cordum H."/>
            <person name="Ali J."/>
            <person name="Andrews S."/>
            <person name="Isak A."/>
            <person name="Vanbrunt A."/>
            <person name="Nguyen C."/>
            <person name="Du F."/>
            <person name="Lamar B."/>
            <person name="Courtney L."/>
            <person name="Kalicki J."/>
            <person name="Ozersky P."/>
            <person name="Bielicki L."/>
            <person name="Scott K."/>
            <person name="Holmes A."/>
            <person name="Harkins R."/>
            <person name="Harris A."/>
            <person name="Strong C.M."/>
            <person name="Hou S."/>
            <person name="Tomlinson C."/>
            <person name="Dauphin-Kohlberg S."/>
            <person name="Kozlowicz-Reilly A."/>
            <person name="Leonard S."/>
            <person name="Rohlfing T."/>
            <person name="Rock S.M."/>
            <person name="Tin-Wollam A.-M."/>
            <person name="Abbott A."/>
            <person name="Minx P."/>
            <person name="Maupin R."/>
            <person name="Strowmatt C."/>
            <person name="Latreille P."/>
            <person name="Miller N."/>
            <person name="Johnson D."/>
            <person name="Murray J."/>
            <person name="Woessner J.P."/>
            <person name="Wendl M.C."/>
            <person name="Yang S.-P."/>
            <person name="Schultz B.R."/>
            <person name="Wallis J.W."/>
            <person name="Spieth J."/>
            <person name="Bieri T.A."/>
            <person name="Nelson J.O."/>
            <person name="Berkowicz N."/>
            <person name="Wohldmann P.E."/>
            <person name="Cook L.L."/>
            <person name="Hickenbotham M.T."/>
            <person name="Eldred J."/>
            <person name="Williams D."/>
            <person name="Bedell J.A."/>
            <person name="Mardis E.R."/>
            <person name="Clifton S.W."/>
            <person name="Chissoe S.L."/>
            <person name="Marra M.A."/>
            <person name="Raymond C."/>
            <person name="Haugen E."/>
            <person name="Gillett W."/>
            <person name="Zhou Y."/>
            <person name="James R."/>
            <person name="Phelps K."/>
            <person name="Iadanoto S."/>
            <person name="Bubb K."/>
            <person name="Simms E."/>
            <person name="Levy R."/>
            <person name="Clendenning J."/>
            <person name="Kaul R."/>
            <person name="Kent W.J."/>
            <person name="Furey T.S."/>
            <person name="Baertsch R.A."/>
            <person name="Brent M.R."/>
            <person name="Keibler E."/>
            <person name="Flicek P."/>
            <person name="Bork P."/>
            <person name="Suyama M."/>
            <person name="Bailey J.A."/>
            <person name="Portnoy M.E."/>
            <person name="Torrents D."/>
            <person name="Chinwalla A.T."/>
            <person name="Gish W.R."/>
            <person name="Eddy S.R."/>
            <person name="McPherson J.D."/>
            <person name="Olson M.V."/>
            <person name="Eichler E.E."/>
            <person name="Green E.D."/>
            <person name="Waterston R.H."/>
            <person name="Wilson R.K."/>
        </authorList>
    </citation>
    <scope>NUCLEOTIDE SEQUENCE [LARGE SCALE GENOMIC DNA]</scope>
</reference>
<reference key="4">
    <citation type="journal article" date="2004" name="Genome Res.">
        <title>The status, quality, and expansion of the NIH full-length cDNA project: the Mammalian Gene Collection (MGC).</title>
        <authorList>
            <consortium name="The MGC Project Team"/>
        </authorList>
    </citation>
    <scope>NUCLEOTIDE SEQUENCE [LARGE SCALE MRNA] (ISOFORM 2)</scope>
</reference>
<reference key="5">
    <citation type="journal article" date="2009" name="Biochem. Biophys. Res. Commun.">
        <title>Identification of a common microdeletion cluster in 7q21.3 subband among patients with myeloid leukemia and myelodysplastic syndrome.</title>
        <authorList>
            <person name="Asou H."/>
            <person name="Matsui H."/>
            <person name="Ozaki Y."/>
            <person name="Nagamachi A."/>
            <person name="Nakamura M."/>
            <person name="Aki D."/>
            <person name="Inaba T."/>
        </authorList>
    </citation>
    <scope>TISSUE SPECIFICITY</scope>
    <scope>ALTERNATIVE SPLICING</scope>
    <scope>SUBCELLULAR LOCATION</scope>
    <scope>GLYCOSYLATION</scope>
</reference>
<reference key="6">
    <citation type="journal article" date="2012" name="Mol. Cell">
        <title>Poly-ADP ribosylation of Miki by tankyrase-1 promotes centrosome maturation.</title>
        <authorList>
            <person name="Ozaki Y."/>
            <person name="Matsui H."/>
            <person name="Asou H."/>
            <person name="Nagamachi A."/>
            <person name="Aki D."/>
            <person name="Honda H."/>
            <person name="Yasunaga S."/>
            <person name="Takihara Y."/>
            <person name="Yamamoto T."/>
            <person name="Izumi S."/>
            <person name="Ohsugi M."/>
            <person name="Inaba T."/>
        </authorList>
    </citation>
    <scope>FUNCTION</scope>
    <scope>SUBCELLULAR LOCATION</scope>
    <scope>GLYCOSYLATION</scope>
    <scope>ADP-RIBOSYLATION</scope>
</reference>
<reference key="7">
    <citation type="journal article" date="2006" name="Science">
        <title>The consensus coding sequences of human breast and colorectal cancers.</title>
        <authorList>
            <person name="Sjoeblom T."/>
            <person name="Jones S."/>
            <person name="Wood L.D."/>
            <person name="Parsons D.W."/>
            <person name="Lin J."/>
            <person name="Barber T.D."/>
            <person name="Mandelker D."/>
            <person name="Leary R.J."/>
            <person name="Ptak J."/>
            <person name="Silliman N."/>
            <person name="Szabo S."/>
            <person name="Buckhaults P."/>
            <person name="Farrell C."/>
            <person name="Meeh P."/>
            <person name="Markowitz S.D."/>
            <person name="Willis J."/>
            <person name="Dawson D."/>
            <person name="Willson J.K.V."/>
            <person name="Gazdar A.F."/>
            <person name="Hartigan J."/>
            <person name="Wu L."/>
            <person name="Liu C."/>
            <person name="Parmigiani G."/>
            <person name="Park B.H."/>
            <person name="Bachman K.E."/>
            <person name="Papadopoulos N."/>
            <person name="Vogelstein B."/>
            <person name="Kinzler K.W."/>
            <person name="Velculescu V.E."/>
        </authorList>
    </citation>
    <scope>VARIANT [LARGE SCALE ANALYSIS] ARG-31</scope>
</reference>
<reference key="8">
    <citation type="journal article" date="2011" name="Nature">
        <title>Exome sequencing identifies frequent mutation of the SWI/SNF complex gene PBRM1 in renal carcinoma.</title>
        <authorList>
            <person name="Varela I."/>
            <person name="Tarpey P."/>
            <person name="Raine K."/>
            <person name="Huang D."/>
            <person name="Ong C.K."/>
            <person name="Stephens P."/>
            <person name="Davies H."/>
            <person name="Jones D."/>
            <person name="Lin M.L."/>
            <person name="Teague J."/>
            <person name="Bignell G."/>
            <person name="Butler A."/>
            <person name="Cho J."/>
            <person name="Dalgliesh G.L."/>
            <person name="Galappaththige D."/>
            <person name="Greenman C."/>
            <person name="Hardy C."/>
            <person name="Jia M."/>
            <person name="Latimer C."/>
            <person name="Lau K.W."/>
            <person name="Marshall J."/>
            <person name="McLaren S."/>
            <person name="Menzies A."/>
            <person name="Mudie L."/>
            <person name="Stebbings L."/>
            <person name="Largaespada D.A."/>
            <person name="Wessels L.F.A."/>
            <person name="Richard S."/>
            <person name="Kahnoski R.J."/>
            <person name="Anema J."/>
            <person name="Tuveson D.A."/>
            <person name="Perez-Mancera P.A."/>
            <person name="Mustonen V."/>
            <person name="Fischer A."/>
            <person name="Adams D.J."/>
            <person name="Rust A."/>
            <person name="Chan-On W."/>
            <person name="Subimerb C."/>
            <person name="Dykema K."/>
            <person name="Furge K."/>
            <person name="Campbell P.J."/>
            <person name="Teh B.T."/>
            <person name="Stratton M.R."/>
            <person name="Futreal P.A."/>
        </authorList>
    </citation>
    <scope>VARIANT LEU-114</scope>
</reference>
<keyword id="KW-0013">ADP-ribosylation</keyword>
<keyword id="KW-0025">Alternative splicing</keyword>
<keyword id="KW-0131">Cell cycle</keyword>
<keyword id="KW-0132">Cell division</keyword>
<keyword id="KW-0963">Cytoplasm</keyword>
<keyword id="KW-0206">Cytoskeleton</keyword>
<keyword id="KW-1015">Disulfide bond</keyword>
<keyword id="KW-0325">Glycoprotein</keyword>
<keyword id="KW-0333">Golgi apparatus</keyword>
<keyword id="KW-0393">Immunoglobulin domain</keyword>
<keyword id="KW-0472">Membrane</keyword>
<keyword id="KW-0498">Mitosis</keyword>
<keyword id="KW-1267">Proteomics identification</keyword>
<keyword id="KW-1185">Reference proteome</keyword>
<keyword id="KW-0677">Repeat</keyword>
<keyword id="KW-0732">Signal</keyword>
<keyword id="KW-0812">Transmembrane</keyword>
<keyword id="KW-1133">Transmembrane helix</keyword>